<sequence length="122" mass="14049">MKKGLIMANHRIDRVGMEIKREVNEILRLRVNDPRVQDVTITDVQMLGDLSMAKVFYTIHSTLASDNQKAQIGLEKATGTIKRELGKNLTMYKIPDLQFVKDESIEYGNKIDEMLRNLDKKD</sequence>
<organism>
    <name type="scientific">Streptococcus agalactiae serotype III (strain NEM316)</name>
    <dbReference type="NCBI Taxonomy" id="211110"/>
    <lineage>
        <taxon>Bacteria</taxon>
        <taxon>Bacillati</taxon>
        <taxon>Bacillota</taxon>
        <taxon>Bacilli</taxon>
        <taxon>Lactobacillales</taxon>
        <taxon>Streptococcaceae</taxon>
        <taxon>Streptococcus</taxon>
    </lineage>
</organism>
<dbReference type="EMBL" id="AL766845">
    <property type="protein sequence ID" value="CAD46062.1"/>
    <property type="molecule type" value="Genomic_DNA"/>
</dbReference>
<dbReference type="SMR" id="P65969"/>
<dbReference type="KEGG" id="san:rbfA"/>
<dbReference type="eggNOG" id="COG0858">
    <property type="taxonomic scope" value="Bacteria"/>
</dbReference>
<dbReference type="HOGENOM" id="CLU_089475_3_0_9"/>
<dbReference type="Proteomes" id="UP000000823">
    <property type="component" value="Chromosome"/>
</dbReference>
<dbReference type="GO" id="GO:0005829">
    <property type="term" value="C:cytosol"/>
    <property type="evidence" value="ECO:0007669"/>
    <property type="project" value="TreeGrafter"/>
</dbReference>
<dbReference type="GO" id="GO:0043024">
    <property type="term" value="F:ribosomal small subunit binding"/>
    <property type="evidence" value="ECO:0007669"/>
    <property type="project" value="TreeGrafter"/>
</dbReference>
<dbReference type="GO" id="GO:0030490">
    <property type="term" value="P:maturation of SSU-rRNA"/>
    <property type="evidence" value="ECO:0007669"/>
    <property type="project" value="UniProtKB-UniRule"/>
</dbReference>
<dbReference type="Gene3D" id="3.30.300.20">
    <property type="match status" value="1"/>
</dbReference>
<dbReference type="HAMAP" id="MF_00003">
    <property type="entry name" value="RbfA"/>
    <property type="match status" value="1"/>
</dbReference>
<dbReference type="InterPro" id="IPR015946">
    <property type="entry name" value="KH_dom-like_a/b"/>
</dbReference>
<dbReference type="InterPro" id="IPR000238">
    <property type="entry name" value="RbfA"/>
</dbReference>
<dbReference type="InterPro" id="IPR023799">
    <property type="entry name" value="RbfA_dom_sf"/>
</dbReference>
<dbReference type="InterPro" id="IPR020053">
    <property type="entry name" value="Ribosome-bd_factorA_CS"/>
</dbReference>
<dbReference type="NCBIfam" id="TIGR00082">
    <property type="entry name" value="rbfA"/>
    <property type="match status" value="1"/>
</dbReference>
<dbReference type="PANTHER" id="PTHR33515">
    <property type="entry name" value="RIBOSOME-BINDING FACTOR A, CHLOROPLASTIC-RELATED"/>
    <property type="match status" value="1"/>
</dbReference>
<dbReference type="PANTHER" id="PTHR33515:SF1">
    <property type="entry name" value="RIBOSOME-BINDING FACTOR A, CHLOROPLASTIC-RELATED"/>
    <property type="match status" value="1"/>
</dbReference>
<dbReference type="Pfam" id="PF02033">
    <property type="entry name" value="RBFA"/>
    <property type="match status" value="1"/>
</dbReference>
<dbReference type="SUPFAM" id="SSF89919">
    <property type="entry name" value="Ribosome-binding factor A, RbfA"/>
    <property type="match status" value="1"/>
</dbReference>
<dbReference type="PROSITE" id="PS01319">
    <property type="entry name" value="RBFA"/>
    <property type="match status" value="1"/>
</dbReference>
<accession>P65969</accession>
<accession>Q8E1H2</accession>
<accession>Q8E6Z0</accession>
<protein>
    <recommendedName>
        <fullName evidence="1">Ribosome-binding factor A</fullName>
    </recommendedName>
</protein>
<gene>
    <name evidence="1" type="primary">rbfA</name>
    <name type="ordered locus">gbs0418</name>
</gene>
<name>RBFA_STRA3</name>
<keyword id="KW-0963">Cytoplasm</keyword>
<keyword id="KW-0690">Ribosome biogenesis</keyword>
<feature type="chain" id="PRO_0000102739" description="Ribosome-binding factor A">
    <location>
        <begin position="1"/>
        <end position="122"/>
    </location>
</feature>
<comment type="function">
    <text evidence="1">One of several proteins that assist in the late maturation steps of the functional core of the 30S ribosomal subunit. Associates with free 30S ribosomal subunits (but not with 30S subunits that are part of 70S ribosomes or polysomes). Required for efficient processing of 16S rRNA. May interact with the 5'-terminal helix region of 16S rRNA.</text>
</comment>
<comment type="subunit">
    <text evidence="1">Monomer. Binds 30S ribosomal subunits, but not 50S ribosomal subunits or 70S ribosomes.</text>
</comment>
<comment type="subcellular location">
    <subcellularLocation>
        <location evidence="1">Cytoplasm</location>
    </subcellularLocation>
</comment>
<comment type="similarity">
    <text evidence="1">Belongs to the RbfA family.</text>
</comment>
<proteinExistence type="inferred from homology"/>
<evidence type="ECO:0000255" key="1">
    <source>
        <dbReference type="HAMAP-Rule" id="MF_00003"/>
    </source>
</evidence>
<reference key="1">
    <citation type="journal article" date="2002" name="Mol. Microbiol.">
        <title>Genome sequence of Streptococcus agalactiae, a pathogen causing invasive neonatal disease.</title>
        <authorList>
            <person name="Glaser P."/>
            <person name="Rusniok C."/>
            <person name="Buchrieser C."/>
            <person name="Chevalier F."/>
            <person name="Frangeul L."/>
            <person name="Msadek T."/>
            <person name="Zouine M."/>
            <person name="Couve E."/>
            <person name="Lalioui L."/>
            <person name="Poyart C."/>
            <person name="Trieu-Cuot P."/>
            <person name="Kunst F."/>
        </authorList>
    </citation>
    <scope>NUCLEOTIDE SEQUENCE [LARGE SCALE GENOMIC DNA]</scope>
    <source>
        <strain>NEM316</strain>
    </source>
</reference>